<name>UCPB_DICDI</name>
<comment type="function">
    <text evidence="1">Mitochondrial solute carriers shuttle metabolites, nucleotides, and cofactors through the mitochondrial inner membrane.</text>
</comment>
<comment type="subcellular location">
    <subcellularLocation>
        <location evidence="1">Mitochondrion inner membrane</location>
        <topology evidence="1">Multi-pass membrane protein</topology>
    </subcellularLocation>
</comment>
<comment type="similarity">
    <text evidence="3">Belongs to the mitochondrial carrier (TC 2.A.29) family.</text>
</comment>
<accession>B0G143</accession>
<keyword id="KW-0472">Membrane</keyword>
<keyword id="KW-0496">Mitochondrion</keyword>
<keyword id="KW-0999">Mitochondrion inner membrane</keyword>
<keyword id="KW-1185">Reference proteome</keyword>
<keyword id="KW-0677">Repeat</keyword>
<keyword id="KW-0812">Transmembrane</keyword>
<keyword id="KW-1133">Transmembrane helix</keyword>
<keyword id="KW-0813">Transport</keyword>
<sequence>MTSQESIGIKFLFGGLSCMGAAVVSNPVDVLKTRFQIHGEGIDSKSLGLVNGTIKIIKNEGISAMYKGLTPSLLREATYSTLRMGGYDVIKNYFIDSNGKTNLLSKVTSGALSGALGACITSPTDLIKVRMQASSKGVKYDSISSAFKEIIAKEGIKGLWKGVGPTTQRAALLTASQIPSYDHIKHMILDHGIIQVDGLQVHIVSSIFAGLIASITTSPVDLVKTRIMNQPFDSNGVGLIYKSSYDCFKKTFQSEGISGLYKGFLPNWFRIGPHTIVTFILYEYLRKVSGIKPI</sequence>
<organism>
    <name type="scientific">Dictyostelium discoideum</name>
    <name type="common">Social amoeba</name>
    <dbReference type="NCBI Taxonomy" id="44689"/>
    <lineage>
        <taxon>Eukaryota</taxon>
        <taxon>Amoebozoa</taxon>
        <taxon>Evosea</taxon>
        <taxon>Eumycetozoa</taxon>
        <taxon>Dictyostelia</taxon>
        <taxon>Dictyosteliales</taxon>
        <taxon>Dictyosteliaceae</taxon>
        <taxon>Dictyostelium</taxon>
    </lineage>
</organism>
<gene>
    <name type="primary">ucpB</name>
    <name type="synonym">slc25a30</name>
    <name type="ORF">DDB_G0283333</name>
</gene>
<dbReference type="EMBL" id="AAFI02000052">
    <property type="protein sequence ID" value="EDR41064.1"/>
    <property type="molecule type" value="Genomic_DNA"/>
</dbReference>
<dbReference type="RefSeq" id="XP_001733006.1">
    <property type="nucleotide sequence ID" value="XM_001732954.1"/>
</dbReference>
<dbReference type="SMR" id="B0G143"/>
<dbReference type="FunCoup" id="B0G143">
    <property type="interactions" value="122"/>
</dbReference>
<dbReference type="STRING" id="44689.B0G143"/>
<dbReference type="GlyGen" id="B0G143">
    <property type="glycosylation" value="1 site"/>
</dbReference>
<dbReference type="PaxDb" id="44689-DDB0233499"/>
<dbReference type="EnsemblProtists" id="EDR41064">
    <property type="protein sequence ID" value="EDR41064"/>
    <property type="gene ID" value="DDB_G0283333"/>
</dbReference>
<dbReference type="GeneID" id="8624014"/>
<dbReference type="KEGG" id="ddi:DDB_G0283333"/>
<dbReference type="dictyBase" id="DDB_G0283333">
    <property type="gene designation" value="ucpB"/>
</dbReference>
<dbReference type="VEuPathDB" id="AmoebaDB:DDB_G0283333"/>
<dbReference type="eggNOG" id="KOG0753">
    <property type="taxonomic scope" value="Eukaryota"/>
</dbReference>
<dbReference type="HOGENOM" id="CLU_015166_14_2_1"/>
<dbReference type="InParanoid" id="B0G143"/>
<dbReference type="OMA" id="IMPALNW"/>
<dbReference type="PhylomeDB" id="B0G143"/>
<dbReference type="PRO" id="PR:B0G143"/>
<dbReference type="Proteomes" id="UP000002195">
    <property type="component" value="Chromosome 4"/>
</dbReference>
<dbReference type="GO" id="GO:0005743">
    <property type="term" value="C:mitochondrial inner membrane"/>
    <property type="evidence" value="ECO:0007669"/>
    <property type="project" value="UniProtKB-SubCell"/>
</dbReference>
<dbReference type="GO" id="GO:0022857">
    <property type="term" value="F:transmembrane transporter activity"/>
    <property type="evidence" value="ECO:0000318"/>
    <property type="project" value="GO_Central"/>
</dbReference>
<dbReference type="GO" id="GO:0046686">
    <property type="term" value="P:response to cadmium ion"/>
    <property type="evidence" value="ECO:0007007"/>
    <property type="project" value="dictyBase"/>
</dbReference>
<dbReference type="FunFam" id="1.50.40.10:FF:000062">
    <property type="entry name" value="mitochondrial uncoupling protein 3"/>
    <property type="match status" value="1"/>
</dbReference>
<dbReference type="Gene3D" id="1.50.40.10">
    <property type="entry name" value="Mitochondrial carrier domain"/>
    <property type="match status" value="1"/>
</dbReference>
<dbReference type="InterPro" id="IPR002067">
    <property type="entry name" value="Mit_carrier"/>
</dbReference>
<dbReference type="InterPro" id="IPR050391">
    <property type="entry name" value="Mito_Metabolite_Transporter"/>
</dbReference>
<dbReference type="InterPro" id="IPR018108">
    <property type="entry name" value="Mitochondrial_sb/sol_carrier"/>
</dbReference>
<dbReference type="InterPro" id="IPR023395">
    <property type="entry name" value="Mt_carrier_dom_sf"/>
</dbReference>
<dbReference type="PANTHER" id="PTHR45618">
    <property type="entry name" value="MITOCHONDRIAL DICARBOXYLATE CARRIER-RELATED"/>
    <property type="match status" value="1"/>
</dbReference>
<dbReference type="Pfam" id="PF00153">
    <property type="entry name" value="Mito_carr"/>
    <property type="match status" value="3"/>
</dbReference>
<dbReference type="PRINTS" id="PR00784">
    <property type="entry name" value="MTUNCOUPLING"/>
</dbReference>
<dbReference type="SUPFAM" id="SSF103506">
    <property type="entry name" value="Mitochondrial carrier"/>
    <property type="match status" value="1"/>
</dbReference>
<dbReference type="PROSITE" id="PS50920">
    <property type="entry name" value="SOLCAR"/>
    <property type="match status" value="3"/>
</dbReference>
<protein>
    <recommendedName>
        <fullName>Mitochondrial substrate carrier family protein ucpB</fullName>
    </recommendedName>
    <alternativeName>
        <fullName>Solute carrier family 25 member 30 homolog</fullName>
    </alternativeName>
    <alternativeName>
        <fullName>Uncoupler protein B</fullName>
    </alternativeName>
</protein>
<reference key="1">
    <citation type="journal article" date="2005" name="Nature">
        <title>The genome of the social amoeba Dictyostelium discoideum.</title>
        <authorList>
            <person name="Eichinger L."/>
            <person name="Pachebat J.A."/>
            <person name="Gloeckner G."/>
            <person name="Rajandream M.A."/>
            <person name="Sucgang R."/>
            <person name="Berriman M."/>
            <person name="Song J."/>
            <person name="Olsen R."/>
            <person name="Szafranski K."/>
            <person name="Xu Q."/>
            <person name="Tunggal B."/>
            <person name="Kummerfeld S."/>
            <person name="Madera M."/>
            <person name="Konfortov B.A."/>
            <person name="Rivero F."/>
            <person name="Bankier A.T."/>
            <person name="Lehmann R."/>
            <person name="Hamlin N."/>
            <person name="Davies R."/>
            <person name="Gaudet P."/>
            <person name="Fey P."/>
            <person name="Pilcher K."/>
            <person name="Chen G."/>
            <person name="Saunders D."/>
            <person name="Sodergren E.J."/>
            <person name="Davis P."/>
            <person name="Kerhornou A."/>
            <person name="Nie X."/>
            <person name="Hall N."/>
            <person name="Anjard C."/>
            <person name="Hemphill L."/>
            <person name="Bason N."/>
            <person name="Farbrother P."/>
            <person name="Desany B."/>
            <person name="Just E."/>
            <person name="Morio T."/>
            <person name="Rost R."/>
            <person name="Churcher C.M."/>
            <person name="Cooper J."/>
            <person name="Haydock S."/>
            <person name="van Driessche N."/>
            <person name="Cronin A."/>
            <person name="Goodhead I."/>
            <person name="Muzny D.M."/>
            <person name="Mourier T."/>
            <person name="Pain A."/>
            <person name="Lu M."/>
            <person name="Harper D."/>
            <person name="Lindsay R."/>
            <person name="Hauser H."/>
            <person name="James K.D."/>
            <person name="Quiles M."/>
            <person name="Madan Babu M."/>
            <person name="Saito T."/>
            <person name="Buchrieser C."/>
            <person name="Wardroper A."/>
            <person name="Felder M."/>
            <person name="Thangavelu M."/>
            <person name="Johnson D."/>
            <person name="Knights A."/>
            <person name="Loulseged H."/>
            <person name="Mungall K.L."/>
            <person name="Oliver K."/>
            <person name="Price C."/>
            <person name="Quail M.A."/>
            <person name="Urushihara H."/>
            <person name="Hernandez J."/>
            <person name="Rabbinowitsch E."/>
            <person name="Steffen D."/>
            <person name="Sanders M."/>
            <person name="Ma J."/>
            <person name="Kohara Y."/>
            <person name="Sharp S."/>
            <person name="Simmonds M.N."/>
            <person name="Spiegler S."/>
            <person name="Tivey A."/>
            <person name="Sugano S."/>
            <person name="White B."/>
            <person name="Walker D."/>
            <person name="Woodward J.R."/>
            <person name="Winckler T."/>
            <person name="Tanaka Y."/>
            <person name="Shaulsky G."/>
            <person name="Schleicher M."/>
            <person name="Weinstock G.M."/>
            <person name="Rosenthal A."/>
            <person name="Cox E.C."/>
            <person name="Chisholm R.L."/>
            <person name="Gibbs R.A."/>
            <person name="Loomis W.F."/>
            <person name="Platzer M."/>
            <person name="Kay R.R."/>
            <person name="Williams J.G."/>
            <person name="Dear P.H."/>
            <person name="Noegel A.A."/>
            <person name="Barrell B.G."/>
            <person name="Kuspa A."/>
        </authorList>
    </citation>
    <scope>NUCLEOTIDE SEQUENCE [LARGE SCALE GENOMIC DNA]</scope>
    <source>
        <strain>AX4</strain>
    </source>
</reference>
<reference key="2">
    <citation type="journal article" date="2007" name="Biochimie">
        <title>Mitochondrial carrier family: repertoire and peculiarities of the cellular slime mould Dictyostelium discoideum.</title>
        <authorList>
            <person name="Satre M."/>
            <person name="Mattei S."/>
            <person name="Aubry L."/>
            <person name="Gaudet P."/>
            <person name="Pelosi L."/>
            <person name="Brandolin G."/>
            <person name="Klein G."/>
        </authorList>
    </citation>
    <scope>REVIEW</scope>
</reference>
<evidence type="ECO:0000250" key="1"/>
<evidence type="ECO:0000255" key="2"/>
<evidence type="ECO:0000305" key="3"/>
<feature type="chain" id="PRO_0000385535" description="Mitochondrial substrate carrier family protein ucpB">
    <location>
        <begin position="1"/>
        <end position="294"/>
    </location>
</feature>
<feature type="topological domain" description="Mitochondrial intermembrane" evidence="1">
    <location>
        <begin position="1"/>
        <end position="10"/>
    </location>
</feature>
<feature type="transmembrane region" description="Helical; Name=1" evidence="2">
    <location>
        <begin position="11"/>
        <end position="31"/>
    </location>
</feature>
<feature type="topological domain" description="Mitochondrial matrix" evidence="1">
    <location>
        <begin position="32"/>
        <end position="67"/>
    </location>
</feature>
<feature type="transmembrane region" description="Helical; Name=2" evidence="2">
    <location>
        <begin position="68"/>
        <end position="88"/>
    </location>
</feature>
<feature type="topological domain" description="Mitochondrial intermembrane" evidence="1">
    <location>
        <begin position="89"/>
        <end position="106"/>
    </location>
</feature>
<feature type="transmembrane region" description="Helical; Name=3" evidence="2">
    <location>
        <begin position="107"/>
        <end position="127"/>
    </location>
</feature>
<feature type="topological domain" description="Mitochondrial matrix" evidence="1">
    <location>
        <begin position="128"/>
        <end position="161"/>
    </location>
</feature>
<feature type="transmembrane region" description="Helical; Name=4" evidence="2">
    <location>
        <begin position="162"/>
        <end position="182"/>
    </location>
</feature>
<feature type="topological domain" description="Mitochondrial intermembrane" evidence="1">
    <location>
        <begin position="183"/>
        <end position="192"/>
    </location>
</feature>
<feature type="transmembrane region" description="Helical; Name=5" evidence="2">
    <location>
        <begin position="193"/>
        <end position="213"/>
    </location>
</feature>
<feature type="topological domain" description="Mitochondrial matrix" evidence="1">
    <location>
        <begin position="214"/>
        <end position="267"/>
    </location>
</feature>
<feature type="transmembrane region" description="Helical; Name=6" evidence="2">
    <location>
        <begin position="268"/>
        <end position="285"/>
    </location>
</feature>
<feature type="topological domain" description="Mitochondrial intermembrane" evidence="1">
    <location>
        <begin position="286"/>
        <end position="294"/>
    </location>
</feature>
<feature type="repeat" description="Solcar 1">
    <location>
        <begin position="9"/>
        <end position="93"/>
    </location>
</feature>
<feature type="repeat" description="Solcar 2">
    <location>
        <begin position="101"/>
        <end position="187"/>
    </location>
</feature>
<feature type="repeat" description="Solcar 3">
    <location>
        <begin position="197"/>
        <end position="288"/>
    </location>
</feature>
<proteinExistence type="inferred from homology"/>